<protein>
    <recommendedName>
        <fullName evidence="1">Polymerase basic protein 2</fullName>
    </recommendedName>
    <alternativeName>
        <fullName evidence="1">RNA-directed RNA polymerase subunit P3</fullName>
    </alternativeName>
</protein>
<reference key="1">
    <citation type="submission" date="2006-08" db="EMBL/GenBank/DDBJ databases">
        <title>The NIAID influenza genome sequencing project.</title>
        <authorList>
            <person name="Spiro D."/>
            <person name="Ghedin E."/>
            <person name="Sengamalay N."/>
            <person name="Halpin R."/>
            <person name="Boyne A."/>
            <person name="Zaborsky J."/>
            <person name="Feldblyum T."/>
            <person name="Subbu V."/>
            <person name="Sparenborg J."/>
            <person name="Shumway M."/>
            <person name="Sitz J."/>
            <person name="Katzel D."/>
            <person name="Koo H."/>
            <person name="Salzberg S.L."/>
            <person name="Griesemer S."/>
            <person name="St George K."/>
            <person name="Bennett R."/>
            <person name="Taylor J."/>
            <person name="Bennink J.R."/>
            <person name="Yewdell J.W."/>
            <person name="Bao Y."/>
            <person name="Bolotov P."/>
            <person name="Dernovoy D."/>
            <person name="Kiryutin B."/>
            <person name="Lipman D.J."/>
            <person name="Tatusova T."/>
        </authorList>
    </citation>
    <scope>NUCLEOTIDE SEQUENCE [GENOMIC RNA]</scope>
</reference>
<reference key="2">
    <citation type="submission" date="2006-09" db="EMBL/GenBank/DDBJ databases">
        <authorList>
            <consortium name="The NIAID Influenza Genome Sequencing Consortium"/>
        </authorList>
    </citation>
    <scope>NUCLEOTIDE SEQUENCE [GENOMIC RNA]</scope>
</reference>
<organismHost>
    <name type="scientific">Aves</name>
    <dbReference type="NCBI Taxonomy" id="8782"/>
</organismHost>
<organismHost>
    <name type="scientific">Homo sapiens</name>
    <name type="common">Human</name>
    <dbReference type="NCBI Taxonomy" id="9606"/>
</organismHost>
<organismHost>
    <name type="scientific">Sus scrofa</name>
    <name type="common">Pig</name>
    <dbReference type="NCBI Taxonomy" id="9823"/>
</organismHost>
<evidence type="ECO:0000255" key="1">
    <source>
        <dbReference type="HAMAP-Rule" id="MF_04062"/>
    </source>
</evidence>
<accession>Q0HD50</accession>
<gene>
    <name evidence="1" type="primary">PB2</name>
</gene>
<organism>
    <name type="scientific">Influenza A virus (strain A/Hickox/1940 H1N1)</name>
    <dbReference type="NCBI Taxonomy" id="383543"/>
    <lineage>
        <taxon>Viruses</taxon>
        <taxon>Riboviria</taxon>
        <taxon>Orthornavirae</taxon>
        <taxon>Negarnaviricota</taxon>
        <taxon>Polyploviricotina</taxon>
        <taxon>Insthoviricetes</taxon>
        <taxon>Articulavirales</taxon>
        <taxon>Orthomyxoviridae</taxon>
        <taxon>Alphainfluenzavirus</taxon>
        <taxon>Alphainfluenzavirus influenzae</taxon>
        <taxon>Influenza A virus</taxon>
    </lineage>
</organism>
<keyword id="KW-1157">Cap snatching</keyword>
<keyword id="KW-1262">Eukaryotic host gene expression shutoff by virus</keyword>
<keyword id="KW-1191">Eukaryotic host transcription shutoff by virus</keyword>
<keyword id="KW-1190">Host gene expression shutoff by virus</keyword>
<keyword id="KW-1045">Host mitochondrion</keyword>
<keyword id="KW-1048">Host nucleus</keyword>
<keyword id="KW-0945">Host-virus interaction</keyword>
<keyword id="KW-1090">Inhibition of host innate immune response by virus</keyword>
<keyword id="KW-1097">Inhibition of host MAVS by virus</keyword>
<keyword id="KW-1113">Inhibition of host RLR pathway by virus</keyword>
<keyword id="KW-1104">Inhibition of host RNA polymerase II by virus</keyword>
<keyword id="KW-0506">mRNA capping</keyword>
<keyword id="KW-0507">mRNA processing</keyword>
<keyword id="KW-0899">Viral immunoevasion</keyword>
<keyword id="KW-1195">Viral transcription</keyword>
<keyword id="KW-0946">Virion</keyword>
<proteinExistence type="inferred from homology"/>
<comment type="function">
    <text evidence="1">Plays an essential role in transcription initiation and cap-stealing mechanism, in which cellular capped pre-mRNAs are used to generate primers for viral transcription. Recognizes and binds the 7-methylguanosine-containing cap of the target pre-RNA which is subsequently cleaved after 10-13 nucleotides by the viral protein PA. Plays a role in the initiation of the viral genome replication and modulates the activity of the ribonucleoprotein (RNP) complex. In addition, participates in the inhibition of type I interferon induction through interaction with and inhibition of the host mitochondrial antiviral signaling protein MAVS.</text>
</comment>
<comment type="subunit">
    <text evidence="1">Influenza RNA polymerase is composed of three subunits: PB1, PB2 and PA. Interacts (via N-terminus) with PB1 (via C-terminus). Interacts with nucleoprotein NP (via N-terminus). Interacts (via N-terminus) with host MAVS (via N-terminus); this interaction inhibits host innate immune response.</text>
</comment>
<comment type="subcellular location">
    <subcellularLocation>
        <location evidence="1">Virion</location>
    </subcellularLocation>
    <subcellularLocation>
        <location evidence="1">Host nucleus</location>
    </subcellularLocation>
    <subcellularLocation>
        <location evidence="1">Host mitochondrion</location>
    </subcellularLocation>
</comment>
<comment type="similarity">
    <text evidence="1">Belongs to the influenza viruses PB2 family.</text>
</comment>
<name>PB2_I40A0</name>
<sequence>MERIKELRNLMSQSRTREILTKTTVDHMAIIKKYTSGRQEKNPSLRMKWMMAMKYPITADKRITEMIPERNEQGQTLWSKMNDAGSDRVMVSPLAVTWWNRNGPMTSTVHYPKIYKTYFEKVERLKHGTFGPVHFRNQVKIRRRVDINPGHADLSAKEAQDVIMEVVFPNEVGARILTSESQLTITKEKKEELQDCKISPLMVAYMLERELVRKTRFLPVAGGTSSVYIEVLHLTQGTCWEQMYTPGGEVRNDDVDQSLIIAARNIVRRAAVSADPLASLLEMCHSTQIGGTKMVDILRQNPTEEQAVDICKAAMGLRISSSFSFGGFTFKRTSGSSVKREEEVLTGNLQTLKIRVHDGYEEFTMVGKRATAILRKATRRLIQLIVSGRDEQSIAEAIIVAMVFSQEDCMIKAVRGDLNFVNRANQRLNPMHQLLRHFQKDAKVLFQNWGIEHIDSVMGMIGILPDMTPSTEMSMRGVRVSKMGVDEYSSAERVVVSIDRFLRVRDQRGNVLLSPEEVSETQGTEKLTITYSSSMMWEINGPESVLVNTYQWIIRNWETVKIQWSQNPTMLYNKMEFEPFQSLVPKAIRGQYSGFVRTLFQQMRDVLGTFDTTQIIKLLPFAAAPPKQSRMQFSSLTVNVRGSGMRILVRGNSPVFNYNKTTKRLTILGKDAGTLTEDPDEGTAGVESAVLRGFLILGKEDRRYGPALSINELSNLAKGEKANVLIGQGDVVLVMKRKRDSSILTDSQTATKRIRMAIN</sequence>
<dbReference type="EMBL" id="CY013278">
    <property type="protein sequence ID" value="ABI20836.1"/>
    <property type="molecule type" value="Other_RNA"/>
</dbReference>
<dbReference type="SMR" id="Q0HD50"/>
<dbReference type="PRO" id="PR:Q0HD50"/>
<dbReference type="Proteomes" id="UP000156248">
    <property type="component" value="Genome"/>
</dbReference>
<dbReference type="GO" id="GO:0033650">
    <property type="term" value="C:host cell mitochondrion"/>
    <property type="evidence" value="ECO:0007669"/>
    <property type="project" value="UniProtKB-SubCell"/>
</dbReference>
<dbReference type="GO" id="GO:0042025">
    <property type="term" value="C:host cell nucleus"/>
    <property type="evidence" value="ECO:0007669"/>
    <property type="project" value="UniProtKB-SubCell"/>
</dbReference>
<dbReference type="GO" id="GO:0044423">
    <property type="term" value="C:virion component"/>
    <property type="evidence" value="ECO:0007669"/>
    <property type="project" value="UniProtKB-UniRule"/>
</dbReference>
<dbReference type="GO" id="GO:0003723">
    <property type="term" value="F:RNA binding"/>
    <property type="evidence" value="ECO:0007669"/>
    <property type="project" value="UniProtKB-UniRule"/>
</dbReference>
<dbReference type="GO" id="GO:0003968">
    <property type="term" value="F:RNA-directed RNA polymerase activity"/>
    <property type="evidence" value="ECO:0007669"/>
    <property type="project" value="UniProtKB-UniRule"/>
</dbReference>
<dbReference type="GO" id="GO:0006370">
    <property type="term" value="P:7-methylguanosine mRNA capping"/>
    <property type="evidence" value="ECO:0007669"/>
    <property type="project" value="UniProtKB-UniRule"/>
</dbReference>
<dbReference type="GO" id="GO:0075526">
    <property type="term" value="P:cap snatching"/>
    <property type="evidence" value="ECO:0007669"/>
    <property type="project" value="UniProtKB-UniRule"/>
</dbReference>
<dbReference type="GO" id="GO:0006351">
    <property type="term" value="P:DNA-templated transcription"/>
    <property type="evidence" value="ECO:0007669"/>
    <property type="project" value="UniProtKB-UniRule"/>
</dbReference>
<dbReference type="GO" id="GO:0039545">
    <property type="term" value="P:symbiont-mediated suppression of host cytoplasmic pattern recognition receptor signaling pathway via inhibition of MAVS activity"/>
    <property type="evidence" value="ECO:0007669"/>
    <property type="project" value="UniProtKB-UniRule"/>
</dbReference>
<dbReference type="GO" id="GO:0039657">
    <property type="term" value="P:symbiont-mediated suppression of host gene expression"/>
    <property type="evidence" value="ECO:0007669"/>
    <property type="project" value="UniProtKB-KW"/>
</dbReference>
<dbReference type="GO" id="GO:0039523">
    <property type="term" value="P:symbiont-mediated suppression of host mRNA transcription via inhibition of RNA polymerase II activity"/>
    <property type="evidence" value="ECO:0007669"/>
    <property type="project" value="UniProtKB-UniRule"/>
</dbReference>
<dbReference type="GO" id="GO:0039694">
    <property type="term" value="P:viral RNA genome replication"/>
    <property type="evidence" value="ECO:0007669"/>
    <property type="project" value="InterPro"/>
</dbReference>
<dbReference type="FunFam" id="3.30.30.90:FF:000001">
    <property type="entry name" value="Polymerase basic protein 2"/>
    <property type="match status" value="1"/>
</dbReference>
<dbReference type="Gene3D" id="3.30.30.90">
    <property type="entry name" value="Polymerase Basic Protein 2, C-terminal domain"/>
    <property type="match status" value="1"/>
</dbReference>
<dbReference type="HAMAP" id="MF_04062">
    <property type="entry name" value="INV_PB2"/>
    <property type="match status" value="1"/>
</dbReference>
<dbReference type="InterPro" id="IPR049110">
    <property type="entry name" value="Flu_PB2_2nd"/>
</dbReference>
<dbReference type="InterPro" id="IPR049114">
    <property type="entry name" value="Flu_PB2_6th"/>
</dbReference>
<dbReference type="InterPro" id="IPR049115">
    <property type="entry name" value="Flu_PB2_C"/>
</dbReference>
<dbReference type="InterPro" id="IPR048298">
    <property type="entry name" value="Flu_PB2_CAP-bd"/>
</dbReference>
<dbReference type="InterPro" id="IPR049111">
    <property type="entry name" value="Flu_PB2_middle"/>
</dbReference>
<dbReference type="InterPro" id="IPR049106">
    <property type="entry name" value="Flu_PB2_N"/>
</dbReference>
<dbReference type="InterPro" id="IPR001591">
    <property type="entry name" value="INV_PB2"/>
</dbReference>
<dbReference type="InterPro" id="IPR049113">
    <property type="entry name" value="PB2_helical"/>
</dbReference>
<dbReference type="InterPro" id="IPR037258">
    <property type="entry name" value="PDB2_C"/>
</dbReference>
<dbReference type="Pfam" id="PF20947">
    <property type="entry name" value="Flu_PB2_1st"/>
    <property type="match status" value="1"/>
</dbReference>
<dbReference type="Pfam" id="PF20948">
    <property type="entry name" value="Flu_PB2_2nd"/>
    <property type="match status" value="1"/>
</dbReference>
<dbReference type="Pfam" id="PF20949">
    <property type="entry name" value="Flu_PB2_3rd"/>
    <property type="match status" value="1"/>
</dbReference>
<dbReference type="Pfam" id="PF20950">
    <property type="entry name" value="Flu_PB2_4th"/>
    <property type="match status" value="1"/>
</dbReference>
<dbReference type="Pfam" id="PF00604">
    <property type="entry name" value="Flu_PB2_5th"/>
    <property type="match status" value="1"/>
</dbReference>
<dbReference type="Pfam" id="PF20951">
    <property type="entry name" value="Flu_PB2_6th"/>
    <property type="match status" value="1"/>
</dbReference>
<dbReference type="Pfam" id="PF20952">
    <property type="entry name" value="Flu_PB2_7th"/>
    <property type="match status" value="1"/>
</dbReference>
<dbReference type="SUPFAM" id="SSF160453">
    <property type="entry name" value="PB2 C-terminal domain-like"/>
    <property type="match status" value="1"/>
</dbReference>
<feature type="chain" id="PRO_0000373032" description="Polymerase basic protein 2">
    <location>
        <begin position="1"/>
        <end position="759"/>
    </location>
</feature>
<feature type="short sequence motif" description="Nuclear localization signal" evidence="1">
    <location>
        <begin position="736"/>
        <end position="739"/>
    </location>
</feature>
<feature type="site" description="Mammalian adaptation" evidence="1">
    <location>
        <position position="627"/>
    </location>
</feature>